<dbReference type="EC" id="1.4.1.24" evidence="1"/>
<dbReference type="EMBL" id="AE009439">
    <property type="protein sequence ID" value="AAM02621.1"/>
    <property type="molecule type" value="Genomic_DNA"/>
</dbReference>
<dbReference type="RefSeq" id="WP_011019776.1">
    <property type="nucleotide sequence ID" value="NC_003551.1"/>
</dbReference>
<dbReference type="SMR" id="Q8TVI1"/>
<dbReference type="FunCoup" id="Q8TVI1">
    <property type="interactions" value="7"/>
</dbReference>
<dbReference type="STRING" id="190192.MK1408"/>
<dbReference type="PaxDb" id="190192-MK1408"/>
<dbReference type="EnsemblBacteria" id="AAM02621">
    <property type="protein sequence ID" value="AAM02621"/>
    <property type="gene ID" value="MK1408"/>
</dbReference>
<dbReference type="GeneID" id="1478003"/>
<dbReference type="KEGG" id="mka:MK1408"/>
<dbReference type="PATRIC" id="fig|190192.8.peg.1563"/>
<dbReference type="HOGENOM" id="CLU_056379_0_0_2"/>
<dbReference type="InParanoid" id="Q8TVI1"/>
<dbReference type="OrthoDB" id="10265at2157"/>
<dbReference type="Proteomes" id="UP000001826">
    <property type="component" value="Chromosome"/>
</dbReference>
<dbReference type="GO" id="GO:0003856">
    <property type="term" value="F:3-dehydroquinate synthase activity"/>
    <property type="evidence" value="ECO:0007669"/>
    <property type="project" value="InterPro"/>
</dbReference>
<dbReference type="GO" id="GO:0102042">
    <property type="term" value="F:dehydroquinate synthase activity"/>
    <property type="evidence" value="ECO:0007669"/>
    <property type="project" value="UniProtKB-EC"/>
</dbReference>
<dbReference type="GO" id="GO:0051287">
    <property type="term" value="F:NAD binding"/>
    <property type="evidence" value="ECO:0007669"/>
    <property type="project" value="UniProtKB-UniRule"/>
</dbReference>
<dbReference type="GO" id="GO:0008652">
    <property type="term" value="P:amino acid biosynthetic process"/>
    <property type="evidence" value="ECO:0007669"/>
    <property type="project" value="UniProtKB-KW"/>
</dbReference>
<dbReference type="GO" id="GO:0009073">
    <property type="term" value="P:aromatic amino acid family biosynthetic process"/>
    <property type="evidence" value="ECO:0007669"/>
    <property type="project" value="UniProtKB-UniRule"/>
</dbReference>
<dbReference type="HAMAP" id="MF_01244">
    <property type="entry name" value="Arch_DHQ_synthase"/>
    <property type="match status" value="1"/>
</dbReference>
<dbReference type="InterPro" id="IPR002812">
    <property type="entry name" value="DHQ_synth"/>
</dbReference>
<dbReference type="NCBIfam" id="NF002626">
    <property type="entry name" value="PRK02290.1-4"/>
    <property type="match status" value="1"/>
</dbReference>
<dbReference type="PANTHER" id="PTHR33563">
    <property type="match status" value="1"/>
</dbReference>
<dbReference type="PANTHER" id="PTHR33563:SF1">
    <property type="entry name" value="3-DEHYDROQUINATE SYNTHASE"/>
    <property type="match status" value="1"/>
</dbReference>
<dbReference type="Pfam" id="PF01959">
    <property type="entry name" value="DHQS"/>
    <property type="match status" value="1"/>
</dbReference>
<dbReference type="PIRSF" id="PIRSF006655">
    <property type="entry name" value="DHQ_synth"/>
    <property type="match status" value="1"/>
</dbReference>
<keyword id="KW-0028">Amino-acid biosynthesis</keyword>
<keyword id="KW-0057">Aromatic amino acid biosynthesis</keyword>
<keyword id="KW-0520">NAD</keyword>
<keyword id="KW-0560">Oxidoreductase</keyword>
<keyword id="KW-1185">Reference proteome</keyword>
<reference key="1">
    <citation type="journal article" date="2002" name="Proc. Natl. Acad. Sci. U.S.A.">
        <title>The complete genome of hyperthermophile Methanopyrus kandleri AV19 and monophyly of archaeal methanogens.</title>
        <authorList>
            <person name="Slesarev A.I."/>
            <person name="Mezhevaya K.V."/>
            <person name="Makarova K.S."/>
            <person name="Polushin N.N."/>
            <person name="Shcherbinina O.V."/>
            <person name="Shakhova V.V."/>
            <person name="Belova G.I."/>
            <person name="Aravind L."/>
            <person name="Natale D.A."/>
            <person name="Rogozin I.B."/>
            <person name="Tatusov R.L."/>
            <person name="Wolf Y.I."/>
            <person name="Stetter K.O."/>
            <person name="Malykh A.G."/>
            <person name="Koonin E.V."/>
            <person name="Kozyavkin S.A."/>
        </authorList>
    </citation>
    <scope>NUCLEOTIDE SEQUENCE [LARGE SCALE GENOMIC DNA]</scope>
    <source>
        <strain>AV19 / DSM 6324 / JCM 9639 / NBRC 100938</strain>
    </source>
</reference>
<feature type="chain" id="PRO_0000058770" description="3-dehydroquinate synthase">
    <location>
        <begin position="1"/>
        <end position="402"/>
    </location>
</feature>
<gene>
    <name evidence="1" type="primary">aroB'</name>
    <name type="ordered locus">MK1408</name>
</gene>
<protein>
    <recommendedName>
        <fullName evidence="1">3-dehydroquinate synthase</fullName>
        <shortName evidence="1">DHQ synthase</shortName>
        <ecNumber evidence="1">1.4.1.24</ecNumber>
    </recommendedName>
    <alternativeName>
        <fullName evidence="1">3-dehydroquinate synthase II</fullName>
    </alternativeName>
</protein>
<evidence type="ECO:0000255" key="1">
    <source>
        <dbReference type="HAMAP-Rule" id="MF_01244"/>
    </source>
</evidence>
<organism>
    <name type="scientific">Methanopyrus kandleri (strain AV19 / DSM 6324 / JCM 9639 / NBRC 100938)</name>
    <dbReference type="NCBI Taxonomy" id="190192"/>
    <lineage>
        <taxon>Archaea</taxon>
        <taxon>Methanobacteriati</taxon>
        <taxon>Methanobacteriota</taxon>
        <taxon>Methanomada group</taxon>
        <taxon>Methanopyri</taxon>
        <taxon>Methanopyrales</taxon>
        <taxon>Methanopyraceae</taxon>
        <taxon>Methanopyrus</taxon>
    </lineage>
</organism>
<sequence length="402" mass="44135">MRPKQVWVSVAFEGEWNEKKPYVTESIEAGVDVIVCLPEDVERVKELGNVKVAVPLMPESPGSPDLALEELDAIDADVVIVGKGGEGDGSIDLPDDISESIDAALIEKARDRGFEVAEYVEILDKPYERFAAEIAKNVGPDYVIAIGRDWKIIPLENLIAELQGEKTQLIAGARDAEEARIAFETLEVGSDGVLLDAERIDPSEIKKTAEIAERAAAERFELVAVEVKEVKPIGKGDRVCVDTCSLMSEGEGMLVGSTSRGMFLIHSESLENPYVEPRPFRVNAGPVHAYIRVPGGKTKYLAELRPGDEVLIVDTEGRTRAAVVGRLKIERRPLMLIRAEYEGVEIQTIVQNAETIHLVREDGEPVSVVDLKPGDKVLAYVETEEGKGRHFGMEVEETIVEK</sequence>
<proteinExistence type="inferred from homology"/>
<comment type="function">
    <text evidence="1">Catalyzes the oxidative deamination and cyclization of 2-amino-3,7-dideoxy-D-threo-hept-6-ulosonic acid (ADH) to yield 3-dehydroquinate (DHQ), which is fed into the canonical shikimic pathway of aromatic amino acid biosynthesis.</text>
</comment>
<comment type="catalytic activity">
    <reaction evidence="1">
        <text>2-amino-2,3,7-trideoxy-D-lyxo-hept-6-ulosonate + NAD(+) + H2O = 3-dehydroquinate + NH4(+) + NADH + H(+)</text>
        <dbReference type="Rhea" id="RHEA:25956"/>
        <dbReference type="ChEBI" id="CHEBI:15377"/>
        <dbReference type="ChEBI" id="CHEBI:15378"/>
        <dbReference type="ChEBI" id="CHEBI:28938"/>
        <dbReference type="ChEBI" id="CHEBI:32364"/>
        <dbReference type="ChEBI" id="CHEBI:57540"/>
        <dbReference type="ChEBI" id="CHEBI:57945"/>
        <dbReference type="ChEBI" id="CHEBI:58859"/>
        <dbReference type="EC" id="1.4.1.24"/>
    </reaction>
</comment>
<comment type="similarity">
    <text evidence="1">Belongs to the archaeal-type DHQ synthase family.</text>
</comment>
<accession>Q8TVI1</accession>
<name>DHQS_METKA</name>